<name>SP5G_BACLD</name>
<organism>
    <name type="scientific">Bacillus licheniformis (strain ATCC 14580 / DSM 13 / JCM 2505 / CCUG 7422 / NBRC 12200 / NCIMB 9375 / NCTC 10341 / NRRL NRS-1264 / Gibson 46)</name>
    <dbReference type="NCBI Taxonomy" id="279010"/>
    <lineage>
        <taxon>Bacteria</taxon>
        <taxon>Bacillati</taxon>
        <taxon>Bacillota</taxon>
        <taxon>Bacilli</taxon>
        <taxon>Bacillales</taxon>
        <taxon>Bacillaceae</taxon>
        <taxon>Bacillus</taxon>
    </lineage>
</organism>
<reference key="1">
    <citation type="journal article" date="2004" name="J. Mol. Microbiol. Biotechnol.">
        <title>The complete genome sequence of Bacillus licheniformis DSM13, an organism with great industrial potential.</title>
        <authorList>
            <person name="Veith B."/>
            <person name="Herzberg C."/>
            <person name="Steckel S."/>
            <person name="Feesche J."/>
            <person name="Maurer K.H."/>
            <person name="Ehrenreich P."/>
            <person name="Baeumer S."/>
            <person name="Henne A."/>
            <person name="Liesegang H."/>
            <person name="Merkl R."/>
            <person name="Ehrenreich A."/>
            <person name="Gottschalk G."/>
        </authorList>
    </citation>
    <scope>NUCLEOTIDE SEQUENCE [LARGE SCALE GENOMIC DNA]</scope>
    <source>
        <strain>ATCC 14580 / DSM 13 / JCM 2505 / CCUG 7422 / NBRC 12200 / NCIMB 9375 / NCTC 10341 / NRRL NRS-1264 / Gibson 46</strain>
    </source>
</reference>
<reference key="2">
    <citation type="journal article" date="2004" name="Genome Biol.">
        <title>Complete genome sequence of the industrial bacterium Bacillus licheniformis and comparisons with closely related Bacillus species.</title>
        <authorList>
            <person name="Rey M.W."/>
            <person name="Ramaiya P."/>
            <person name="Nelson B.A."/>
            <person name="Brody-Karpin S.D."/>
            <person name="Zaretsky E.J."/>
            <person name="Tang M."/>
            <person name="Lopez de Leon A."/>
            <person name="Xiang H."/>
            <person name="Gusti V."/>
            <person name="Clausen I.G."/>
            <person name="Olsen P.B."/>
            <person name="Rasmussen M.D."/>
            <person name="Andersen J.T."/>
            <person name="Joergensen P.L."/>
            <person name="Larsen T.S."/>
            <person name="Sorokin A."/>
            <person name="Bolotin A."/>
            <person name="Lapidus A."/>
            <person name="Galleron N."/>
            <person name="Ehrlich S.D."/>
            <person name="Berka R.M."/>
        </authorList>
    </citation>
    <scope>NUCLEOTIDE SEQUENCE [LARGE SCALE GENOMIC DNA]</scope>
    <source>
        <strain>ATCC 14580 / DSM 13 / JCM 2505 / CCUG 7422 / NBRC 12200 / NCIMB 9375 / NCTC 10341 / NRRL NRS-1264 / Gibson 46</strain>
    </source>
</reference>
<comment type="function">
    <text evidence="1">Essential for sporulation. Interferes with or is a negative regulator of the pathway leading to asymmetric septation.</text>
</comment>
<comment type="similarity">
    <text evidence="1">Belongs to the SpoVG family.</text>
</comment>
<proteinExistence type="inferred from homology"/>
<accession>Q65PH2</accession>
<accession>Q62ZW1</accession>
<gene>
    <name evidence="1" type="primary">spoVG</name>
    <name type="ordered locus">BLi00062</name>
    <name type="ordered locus">BL00521</name>
</gene>
<protein>
    <recommendedName>
        <fullName evidence="1">Putative septation protein SpoVG</fullName>
    </recommendedName>
    <alternativeName>
        <fullName evidence="1">Stage V sporulation protein G</fullName>
    </alternativeName>
</protein>
<evidence type="ECO:0000255" key="1">
    <source>
        <dbReference type="HAMAP-Rule" id="MF_00819"/>
    </source>
</evidence>
<feature type="chain" id="PRO_0000157186" description="Putative septation protein SpoVG">
    <location>
        <begin position="1"/>
        <end position="97"/>
    </location>
</feature>
<sequence>MEVTDVRLRRVNTDGRMRAIASITLDHEFVVHDIRVIDGNNGLFVAMPSKRTPDGEFRDIAHPINSSTRGKIQDAVLNEYHRLGDVEEIEYEEIGAS</sequence>
<keyword id="KW-0131">Cell cycle</keyword>
<keyword id="KW-0132">Cell division</keyword>
<keyword id="KW-1185">Reference proteome</keyword>
<keyword id="KW-0717">Septation</keyword>
<keyword id="KW-0749">Sporulation</keyword>
<dbReference type="EMBL" id="AE017333">
    <property type="protein sequence ID" value="AAU39042.1"/>
    <property type="molecule type" value="Genomic_DNA"/>
</dbReference>
<dbReference type="EMBL" id="CP000002">
    <property type="protein sequence ID" value="AAU21697.1"/>
    <property type="molecule type" value="Genomic_DNA"/>
</dbReference>
<dbReference type="RefSeq" id="WP_011197466.1">
    <property type="nucleotide sequence ID" value="NC_006322.1"/>
</dbReference>
<dbReference type="SMR" id="Q65PH2"/>
<dbReference type="STRING" id="279010.BL00521"/>
<dbReference type="GeneID" id="92858986"/>
<dbReference type="KEGG" id="bld:BLi00062"/>
<dbReference type="KEGG" id="bli:BL00521"/>
<dbReference type="PATRIC" id="fig|279010.13.peg.55"/>
<dbReference type="eggNOG" id="COG2088">
    <property type="taxonomic scope" value="Bacteria"/>
</dbReference>
<dbReference type="HOGENOM" id="CLU_103669_2_1_9"/>
<dbReference type="Proteomes" id="UP000000606">
    <property type="component" value="Chromosome"/>
</dbReference>
<dbReference type="GO" id="GO:0030436">
    <property type="term" value="P:asexual sporulation"/>
    <property type="evidence" value="ECO:0007669"/>
    <property type="project" value="UniProtKB-UniRule"/>
</dbReference>
<dbReference type="GO" id="GO:0000917">
    <property type="term" value="P:division septum assembly"/>
    <property type="evidence" value="ECO:0007669"/>
    <property type="project" value="UniProtKB-KW"/>
</dbReference>
<dbReference type="GO" id="GO:0030435">
    <property type="term" value="P:sporulation resulting in formation of a cellular spore"/>
    <property type="evidence" value="ECO:0007669"/>
    <property type="project" value="UniProtKB-KW"/>
</dbReference>
<dbReference type="FunFam" id="3.30.1120.40:FF:000001">
    <property type="entry name" value="Putative septation protein SpoVG"/>
    <property type="match status" value="1"/>
</dbReference>
<dbReference type="Gene3D" id="3.30.1120.40">
    <property type="entry name" value="Stage V sporulation protein G"/>
    <property type="match status" value="1"/>
</dbReference>
<dbReference type="HAMAP" id="MF_00819">
    <property type="entry name" value="SpoVG"/>
    <property type="match status" value="1"/>
</dbReference>
<dbReference type="InterPro" id="IPR007170">
    <property type="entry name" value="SpoVG"/>
</dbReference>
<dbReference type="InterPro" id="IPR036751">
    <property type="entry name" value="SpoVG_sf"/>
</dbReference>
<dbReference type="NCBIfam" id="NF009749">
    <property type="entry name" value="PRK13259.1"/>
    <property type="match status" value="1"/>
</dbReference>
<dbReference type="PANTHER" id="PTHR38429">
    <property type="entry name" value="SEPTATION PROTEIN SPOVG-RELATED"/>
    <property type="match status" value="1"/>
</dbReference>
<dbReference type="PANTHER" id="PTHR38429:SF1">
    <property type="entry name" value="SEPTATION PROTEIN SPOVG-RELATED"/>
    <property type="match status" value="1"/>
</dbReference>
<dbReference type="Pfam" id="PF04026">
    <property type="entry name" value="SpoVG"/>
    <property type="match status" value="1"/>
</dbReference>
<dbReference type="SUPFAM" id="SSF160537">
    <property type="entry name" value="SpoVG-like"/>
    <property type="match status" value="1"/>
</dbReference>